<comment type="function">
    <text evidence="1">Catalyzes the reversible transfer of the terminal phosphate group between ATP and AMP. Plays an important role in cellular energy homeostasis and in adenine nucleotide metabolism.</text>
</comment>
<comment type="catalytic activity">
    <reaction evidence="1">
        <text>AMP + ATP = 2 ADP</text>
        <dbReference type="Rhea" id="RHEA:12973"/>
        <dbReference type="ChEBI" id="CHEBI:30616"/>
        <dbReference type="ChEBI" id="CHEBI:456215"/>
        <dbReference type="ChEBI" id="CHEBI:456216"/>
        <dbReference type="EC" id="2.7.4.3"/>
    </reaction>
</comment>
<comment type="pathway">
    <text evidence="1">Purine metabolism; AMP biosynthesis via salvage pathway; AMP from ADP: step 1/1.</text>
</comment>
<comment type="subunit">
    <text evidence="1">Monomer.</text>
</comment>
<comment type="subcellular location">
    <subcellularLocation>
        <location evidence="1">Cytoplasm</location>
    </subcellularLocation>
</comment>
<comment type="domain">
    <text evidence="1">Consists of three domains, a large central CORE domain and two small peripheral domains, NMPbind and LID, which undergo movements during catalysis. The LID domain closes over the site of phosphoryl transfer upon ATP binding. Assembling and dissambling the active center during each catalytic cycle provides an effective means to prevent ATP hydrolysis. Some bacteria have evolved a zinc-coordinating structure that stabilizes the LID domain.</text>
</comment>
<comment type="similarity">
    <text evidence="1">Belongs to the adenylate kinase family.</text>
</comment>
<sequence>MNIILMGLPGAGKGTQASEIVKKFPIPHISTGDMFRKAIKEETELGKEAKSYMDRGELVPDEVTVGIVKERISEDDAKKGFLLDGFPRTIEQAEALNNIMSELDRNIDAVINIEVPEEELMNRLTGRRICESCGTTYHLVFNPPKVEGICDIDGGKLYQREDDNPETVANRLSVNIKQSKPILDFYDQKGVLKNIDGSKDISDVTKDVIDILDHL</sequence>
<organism>
    <name type="scientific">Staphylococcus aureus (strain MRSA252)</name>
    <dbReference type="NCBI Taxonomy" id="282458"/>
    <lineage>
        <taxon>Bacteria</taxon>
        <taxon>Bacillati</taxon>
        <taxon>Bacillota</taxon>
        <taxon>Bacilli</taxon>
        <taxon>Bacillales</taxon>
        <taxon>Staphylococcaceae</taxon>
        <taxon>Staphylococcus</taxon>
    </lineage>
</organism>
<proteinExistence type="inferred from homology"/>
<evidence type="ECO:0000255" key="1">
    <source>
        <dbReference type="HAMAP-Rule" id="MF_00235"/>
    </source>
</evidence>
<protein>
    <recommendedName>
        <fullName evidence="1">Adenylate kinase</fullName>
        <shortName evidence="1">AK</shortName>
        <ecNumber evidence="1">2.7.4.3</ecNumber>
    </recommendedName>
    <alternativeName>
        <fullName evidence="1">ATP-AMP transphosphorylase</fullName>
    </alternativeName>
    <alternativeName>
        <fullName evidence="1">ATP:AMP phosphotransferase</fullName>
    </alternativeName>
    <alternativeName>
        <fullName evidence="1">Adenylate monophosphate kinase</fullName>
    </alternativeName>
</protein>
<gene>
    <name evidence="1" type="primary">adk</name>
    <name type="ordered locus">SAR2314</name>
</gene>
<dbReference type="EC" id="2.7.4.3" evidence="1"/>
<dbReference type="EMBL" id="BX571856">
    <property type="protein sequence ID" value="CAG41295.1"/>
    <property type="molecule type" value="Genomic_DNA"/>
</dbReference>
<dbReference type="RefSeq" id="WP_001021468.1">
    <property type="nucleotide sequence ID" value="NC_002952.2"/>
</dbReference>
<dbReference type="SMR" id="Q6GEK4"/>
<dbReference type="KEGG" id="sar:SAR2314"/>
<dbReference type="HOGENOM" id="CLU_032354_1_2_9"/>
<dbReference type="UniPathway" id="UPA00588">
    <property type="reaction ID" value="UER00649"/>
</dbReference>
<dbReference type="Proteomes" id="UP000000596">
    <property type="component" value="Chromosome"/>
</dbReference>
<dbReference type="GO" id="GO:0005737">
    <property type="term" value="C:cytoplasm"/>
    <property type="evidence" value="ECO:0007669"/>
    <property type="project" value="UniProtKB-SubCell"/>
</dbReference>
<dbReference type="GO" id="GO:0004017">
    <property type="term" value="F:adenylate kinase activity"/>
    <property type="evidence" value="ECO:0007669"/>
    <property type="project" value="UniProtKB-UniRule"/>
</dbReference>
<dbReference type="GO" id="GO:0005524">
    <property type="term" value="F:ATP binding"/>
    <property type="evidence" value="ECO:0007669"/>
    <property type="project" value="UniProtKB-UniRule"/>
</dbReference>
<dbReference type="GO" id="GO:0008270">
    <property type="term" value="F:zinc ion binding"/>
    <property type="evidence" value="ECO:0007669"/>
    <property type="project" value="UniProtKB-UniRule"/>
</dbReference>
<dbReference type="GO" id="GO:0044209">
    <property type="term" value="P:AMP salvage"/>
    <property type="evidence" value="ECO:0007669"/>
    <property type="project" value="UniProtKB-UniRule"/>
</dbReference>
<dbReference type="CDD" id="cd01428">
    <property type="entry name" value="ADK"/>
    <property type="match status" value="1"/>
</dbReference>
<dbReference type="FunFam" id="3.40.50.300:FF:000106">
    <property type="entry name" value="Adenylate kinase mitochondrial"/>
    <property type="match status" value="1"/>
</dbReference>
<dbReference type="Gene3D" id="3.40.50.300">
    <property type="entry name" value="P-loop containing nucleotide triphosphate hydrolases"/>
    <property type="match status" value="1"/>
</dbReference>
<dbReference type="HAMAP" id="MF_00235">
    <property type="entry name" value="Adenylate_kinase_Adk"/>
    <property type="match status" value="1"/>
</dbReference>
<dbReference type="InterPro" id="IPR006259">
    <property type="entry name" value="Adenyl_kin_sub"/>
</dbReference>
<dbReference type="InterPro" id="IPR000850">
    <property type="entry name" value="Adenylat/UMP-CMP_kin"/>
</dbReference>
<dbReference type="InterPro" id="IPR033690">
    <property type="entry name" value="Adenylat_kinase_CS"/>
</dbReference>
<dbReference type="InterPro" id="IPR007862">
    <property type="entry name" value="Adenylate_kinase_lid-dom"/>
</dbReference>
<dbReference type="InterPro" id="IPR008144">
    <property type="entry name" value="Guanylate_kin-like_dom"/>
</dbReference>
<dbReference type="InterPro" id="IPR027417">
    <property type="entry name" value="P-loop_NTPase"/>
</dbReference>
<dbReference type="NCBIfam" id="TIGR01351">
    <property type="entry name" value="adk"/>
    <property type="match status" value="1"/>
</dbReference>
<dbReference type="NCBIfam" id="NF001380">
    <property type="entry name" value="PRK00279.1-2"/>
    <property type="match status" value="1"/>
</dbReference>
<dbReference type="NCBIfam" id="NF001381">
    <property type="entry name" value="PRK00279.1-3"/>
    <property type="match status" value="1"/>
</dbReference>
<dbReference type="NCBIfam" id="NF011100">
    <property type="entry name" value="PRK14527.1"/>
    <property type="match status" value="1"/>
</dbReference>
<dbReference type="PANTHER" id="PTHR23359">
    <property type="entry name" value="NUCLEOTIDE KINASE"/>
    <property type="match status" value="1"/>
</dbReference>
<dbReference type="Pfam" id="PF00406">
    <property type="entry name" value="ADK"/>
    <property type="match status" value="1"/>
</dbReference>
<dbReference type="Pfam" id="PF05191">
    <property type="entry name" value="ADK_lid"/>
    <property type="match status" value="1"/>
</dbReference>
<dbReference type="PRINTS" id="PR00094">
    <property type="entry name" value="ADENYLTKNASE"/>
</dbReference>
<dbReference type="SUPFAM" id="SSF52540">
    <property type="entry name" value="P-loop containing nucleoside triphosphate hydrolases"/>
    <property type="match status" value="1"/>
</dbReference>
<dbReference type="PROSITE" id="PS00113">
    <property type="entry name" value="ADENYLATE_KINASE"/>
    <property type="match status" value="1"/>
</dbReference>
<keyword id="KW-0067">ATP-binding</keyword>
<keyword id="KW-0963">Cytoplasm</keyword>
<keyword id="KW-0418">Kinase</keyword>
<keyword id="KW-0479">Metal-binding</keyword>
<keyword id="KW-0545">Nucleotide biosynthesis</keyword>
<keyword id="KW-0547">Nucleotide-binding</keyword>
<keyword id="KW-0808">Transferase</keyword>
<keyword id="KW-0862">Zinc</keyword>
<accession>Q6GEK4</accession>
<reference key="1">
    <citation type="journal article" date="2004" name="Proc. Natl. Acad. Sci. U.S.A.">
        <title>Complete genomes of two clinical Staphylococcus aureus strains: evidence for the rapid evolution of virulence and drug resistance.</title>
        <authorList>
            <person name="Holden M.T.G."/>
            <person name="Feil E.J."/>
            <person name="Lindsay J.A."/>
            <person name="Peacock S.J."/>
            <person name="Day N.P.J."/>
            <person name="Enright M.C."/>
            <person name="Foster T.J."/>
            <person name="Moore C.E."/>
            <person name="Hurst L."/>
            <person name="Atkin R."/>
            <person name="Barron A."/>
            <person name="Bason N."/>
            <person name="Bentley S.D."/>
            <person name="Chillingworth C."/>
            <person name="Chillingworth T."/>
            <person name="Churcher C."/>
            <person name="Clark L."/>
            <person name="Corton C."/>
            <person name="Cronin A."/>
            <person name="Doggett J."/>
            <person name="Dowd L."/>
            <person name="Feltwell T."/>
            <person name="Hance Z."/>
            <person name="Harris B."/>
            <person name="Hauser H."/>
            <person name="Holroyd S."/>
            <person name="Jagels K."/>
            <person name="James K.D."/>
            <person name="Lennard N."/>
            <person name="Line A."/>
            <person name="Mayes R."/>
            <person name="Moule S."/>
            <person name="Mungall K."/>
            <person name="Ormond D."/>
            <person name="Quail M.A."/>
            <person name="Rabbinowitsch E."/>
            <person name="Rutherford K.M."/>
            <person name="Sanders M."/>
            <person name="Sharp S."/>
            <person name="Simmonds M."/>
            <person name="Stevens K."/>
            <person name="Whitehead S."/>
            <person name="Barrell B.G."/>
            <person name="Spratt B.G."/>
            <person name="Parkhill J."/>
        </authorList>
    </citation>
    <scope>NUCLEOTIDE SEQUENCE [LARGE SCALE GENOMIC DNA]</scope>
    <source>
        <strain>MRSA252</strain>
    </source>
</reference>
<name>KAD_STAAR</name>
<feature type="chain" id="PRO_0000158847" description="Adenylate kinase">
    <location>
        <begin position="1"/>
        <end position="215"/>
    </location>
</feature>
<feature type="region of interest" description="NMP" evidence="1">
    <location>
        <begin position="30"/>
        <end position="59"/>
    </location>
</feature>
<feature type="region of interest" description="LID" evidence="1">
    <location>
        <begin position="126"/>
        <end position="163"/>
    </location>
</feature>
<feature type="binding site" evidence="1">
    <location>
        <begin position="10"/>
        <end position="15"/>
    </location>
    <ligand>
        <name>ATP</name>
        <dbReference type="ChEBI" id="CHEBI:30616"/>
    </ligand>
</feature>
<feature type="binding site" evidence="1">
    <location>
        <position position="31"/>
    </location>
    <ligand>
        <name>AMP</name>
        <dbReference type="ChEBI" id="CHEBI:456215"/>
    </ligand>
</feature>
<feature type="binding site" evidence="1">
    <location>
        <position position="36"/>
    </location>
    <ligand>
        <name>AMP</name>
        <dbReference type="ChEBI" id="CHEBI:456215"/>
    </ligand>
</feature>
<feature type="binding site" evidence="1">
    <location>
        <begin position="57"/>
        <end position="59"/>
    </location>
    <ligand>
        <name>AMP</name>
        <dbReference type="ChEBI" id="CHEBI:456215"/>
    </ligand>
</feature>
<feature type="binding site" evidence="1">
    <location>
        <begin position="85"/>
        <end position="88"/>
    </location>
    <ligand>
        <name>AMP</name>
        <dbReference type="ChEBI" id="CHEBI:456215"/>
    </ligand>
</feature>
<feature type="binding site" evidence="1">
    <location>
        <position position="92"/>
    </location>
    <ligand>
        <name>AMP</name>
        <dbReference type="ChEBI" id="CHEBI:456215"/>
    </ligand>
</feature>
<feature type="binding site" evidence="1">
    <location>
        <position position="127"/>
    </location>
    <ligand>
        <name>ATP</name>
        <dbReference type="ChEBI" id="CHEBI:30616"/>
    </ligand>
</feature>
<feature type="binding site" evidence="1">
    <location>
        <position position="130"/>
    </location>
    <ligand>
        <name>Zn(2+)</name>
        <dbReference type="ChEBI" id="CHEBI:29105"/>
        <note>structural</note>
    </ligand>
</feature>
<feature type="binding site" evidence="1">
    <location>
        <position position="133"/>
    </location>
    <ligand>
        <name>Zn(2+)</name>
        <dbReference type="ChEBI" id="CHEBI:29105"/>
        <note>structural</note>
    </ligand>
</feature>
<feature type="binding site" evidence="1">
    <location>
        <begin position="136"/>
        <end position="137"/>
    </location>
    <ligand>
        <name>ATP</name>
        <dbReference type="ChEBI" id="CHEBI:30616"/>
    </ligand>
</feature>
<feature type="binding site" evidence="1">
    <location>
        <position position="150"/>
    </location>
    <ligand>
        <name>Zn(2+)</name>
        <dbReference type="ChEBI" id="CHEBI:29105"/>
        <note>structural</note>
    </ligand>
</feature>
<feature type="binding site" evidence="1">
    <location>
        <position position="153"/>
    </location>
    <ligand>
        <name>Zn(2+)</name>
        <dbReference type="ChEBI" id="CHEBI:29105"/>
        <note>structural</note>
    </ligand>
</feature>
<feature type="binding site" evidence="1">
    <location>
        <position position="160"/>
    </location>
    <ligand>
        <name>AMP</name>
        <dbReference type="ChEBI" id="CHEBI:456215"/>
    </ligand>
</feature>
<feature type="binding site" evidence="1">
    <location>
        <position position="171"/>
    </location>
    <ligand>
        <name>AMP</name>
        <dbReference type="ChEBI" id="CHEBI:456215"/>
    </ligand>
</feature>
<feature type="binding site" evidence="1">
    <location>
        <position position="199"/>
    </location>
    <ligand>
        <name>ATP</name>
        <dbReference type="ChEBI" id="CHEBI:30616"/>
    </ligand>
</feature>